<keyword id="KW-1015">Disulfide bond</keyword>
<keyword id="KW-0928">Hypersensitive response elicitation</keyword>
<keyword id="KW-0964">Secreted</keyword>
<keyword id="KW-0732">Signal</keyword>
<name>ELI2_PYTOL</name>
<dbReference type="EMBL" id="AB217821">
    <property type="protein sequence ID" value="BAE95200.1"/>
    <property type="molecule type" value="mRNA"/>
</dbReference>
<dbReference type="SMR" id="Q1ESR4"/>
<dbReference type="GO" id="GO:0005576">
    <property type="term" value="C:extracellular region"/>
    <property type="evidence" value="ECO:0007669"/>
    <property type="project" value="UniProtKB-SubCell"/>
</dbReference>
<dbReference type="GO" id="GO:0052040">
    <property type="term" value="P:symbiont-mediated perturbation of host programmed cell death"/>
    <property type="evidence" value="ECO:0007669"/>
    <property type="project" value="UniProtKB-KW"/>
</dbReference>
<dbReference type="Gene3D" id="1.10.239.10">
    <property type="entry name" value="Elicitin domain"/>
    <property type="match status" value="1"/>
</dbReference>
<dbReference type="InterPro" id="IPR002200">
    <property type="entry name" value="Elicitin"/>
</dbReference>
<dbReference type="InterPro" id="IPR036470">
    <property type="entry name" value="Elicitin_sf"/>
</dbReference>
<dbReference type="Pfam" id="PF00964">
    <property type="entry name" value="Elicitin"/>
    <property type="match status" value="1"/>
</dbReference>
<dbReference type="PRINTS" id="PR00948">
    <property type="entry name" value="ELICITIN"/>
</dbReference>
<dbReference type="SMART" id="SM01187">
    <property type="entry name" value="Elicitin"/>
    <property type="match status" value="1"/>
</dbReference>
<dbReference type="SUPFAM" id="SSF48647">
    <property type="entry name" value="Fungal elicitin"/>
    <property type="match status" value="1"/>
</dbReference>
<evidence type="ECO:0000250" key="1"/>
<evidence type="ECO:0000255" key="2"/>
<evidence type="ECO:0000256" key="3">
    <source>
        <dbReference type="SAM" id="MobiDB-lite"/>
    </source>
</evidence>
<evidence type="ECO:0000305" key="4"/>
<sequence length="164" mass="16544">MFSKTLVVLAAVAAVTVNGLTAKECQDAFTGEVAKLTTGALPLVQPCSSDSGFSMVPPTGLPTDDQYVKMCASKNCKALLEFIKGAGLKDCELNFGSIFPGSVPLNVYQLGQGFDAKCESISGGGSTPTTAPPSGTTPTTPTTAPPTGTTPGVTPSPTTPKPAC</sequence>
<protein>
    <recommendedName>
        <fullName>Elicitin-like protein 2</fullName>
    </recommendedName>
</protein>
<organism>
    <name type="scientific">Pythium oligandrum</name>
    <name type="common">Mycoparasitic fungus</name>
    <dbReference type="NCBI Taxonomy" id="41045"/>
    <lineage>
        <taxon>Eukaryota</taxon>
        <taxon>Sar</taxon>
        <taxon>Stramenopiles</taxon>
        <taxon>Oomycota</taxon>
        <taxon>Pythiales</taxon>
        <taxon>Pythiaceae</taxon>
        <taxon>Pythium</taxon>
    </lineage>
</organism>
<reference key="1">
    <citation type="journal article" date="2006" name="Mol. Plant Pathol.">
        <title>Novel elicitin-like proteins isolated from the cell wall of the biocontrol agent Pythium oligandrum induce defence-related genes in sugar beet.</title>
        <authorList>
            <person name="Takenaka S."/>
            <person name="Nakamura Y."/>
            <person name="Kono T."/>
            <person name="Sekiguchi H."/>
            <person name="Masunaka A."/>
            <person name="Takahashi H."/>
        </authorList>
        <dbReference type="AGRICOLA" id="IND43833169"/>
    </citation>
    <scope>NUCLEOTIDE SEQUENCE [MRNA]</scope>
</reference>
<proteinExistence type="evidence at transcript level"/>
<comment type="function">
    <text evidence="1">Induces local and distal defense responses (incompatible hypersensitive reaction) in plants from the solanaceae and cruciferae families. Elicits leaf necrosis and causes the accumulation of pathogenesis-related proteins. Might interact with the lipidic molecules of the plasma membrane (By similarity).</text>
</comment>
<comment type="subcellular location">
    <subcellularLocation>
        <location>Secreted</location>
    </subcellularLocation>
</comment>
<comment type="similarity">
    <text evidence="4">Belongs to the elicitin family.</text>
</comment>
<accession>Q1ESR4</accession>
<feature type="signal peptide" evidence="2">
    <location>
        <begin position="1"/>
        <end position="22"/>
    </location>
</feature>
<feature type="chain" id="PRO_0000260283" description="Elicitin-like protein 2">
    <location>
        <begin position="23"/>
        <end position="164"/>
    </location>
</feature>
<feature type="region of interest" description="Disordered" evidence="3">
    <location>
        <begin position="121"/>
        <end position="164"/>
    </location>
</feature>
<feature type="compositionally biased region" description="Low complexity" evidence="3">
    <location>
        <begin position="127"/>
        <end position="156"/>
    </location>
</feature>
<feature type="disulfide bond" evidence="1">
    <location>
        <begin position="25"/>
        <end position="91"/>
    </location>
</feature>
<feature type="disulfide bond" evidence="1">
    <location>
        <begin position="47"/>
        <end position="76"/>
    </location>
</feature>
<feature type="disulfide bond" evidence="1">
    <location>
        <begin position="71"/>
        <end position="118"/>
    </location>
</feature>
<gene>
    <name type="primary">POD-2</name>
</gene>